<dbReference type="EC" id="2.1.1.-"/>
<dbReference type="EMBL" id="CP000348">
    <property type="protein sequence ID" value="ABJ80298.1"/>
    <property type="molecule type" value="Genomic_DNA"/>
</dbReference>
<dbReference type="RefSeq" id="WP_011671196.1">
    <property type="nucleotide sequence ID" value="NC_008508.1"/>
</dbReference>
<dbReference type="SMR" id="Q04X97"/>
<dbReference type="KEGG" id="lbl:LBL_2985"/>
<dbReference type="HOGENOM" id="CLU_1093258_0_0_12"/>
<dbReference type="GO" id="GO:0005829">
    <property type="term" value="C:cytosol"/>
    <property type="evidence" value="ECO:0007669"/>
    <property type="project" value="TreeGrafter"/>
</dbReference>
<dbReference type="GO" id="GO:0070043">
    <property type="term" value="F:rRNA (guanine-N7-)-methyltransferase activity"/>
    <property type="evidence" value="ECO:0007669"/>
    <property type="project" value="UniProtKB-UniRule"/>
</dbReference>
<dbReference type="Gene3D" id="3.40.50.150">
    <property type="entry name" value="Vaccinia Virus protein VP39"/>
    <property type="match status" value="1"/>
</dbReference>
<dbReference type="InterPro" id="IPR003682">
    <property type="entry name" value="rRNA_ssu_MeTfrase_G"/>
</dbReference>
<dbReference type="InterPro" id="IPR029063">
    <property type="entry name" value="SAM-dependent_MTases_sf"/>
</dbReference>
<dbReference type="PANTHER" id="PTHR31760">
    <property type="entry name" value="S-ADENOSYL-L-METHIONINE-DEPENDENT METHYLTRANSFERASES SUPERFAMILY PROTEIN"/>
    <property type="match status" value="1"/>
</dbReference>
<dbReference type="PANTHER" id="PTHR31760:SF0">
    <property type="entry name" value="S-ADENOSYL-L-METHIONINE-DEPENDENT METHYLTRANSFERASES SUPERFAMILY PROTEIN"/>
    <property type="match status" value="1"/>
</dbReference>
<dbReference type="Pfam" id="PF02527">
    <property type="entry name" value="GidB"/>
    <property type="match status" value="1"/>
</dbReference>
<dbReference type="PIRSF" id="PIRSF003078">
    <property type="entry name" value="GidB"/>
    <property type="match status" value="1"/>
</dbReference>
<dbReference type="SUPFAM" id="SSF53335">
    <property type="entry name" value="S-adenosyl-L-methionine-dependent methyltransferases"/>
    <property type="match status" value="1"/>
</dbReference>
<keyword id="KW-0963">Cytoplasm</keyword>
<keyword id="KW-0489">Methyltransferase</keyword>
<keyword id="KW-0698">rRNA processing</keyword>
<keyword id="KW-0949">S-adenosyl-L-methionine</keyword>
<keyword id="KW-0808">Transferase</keyword>
<protein>
    <recommendedName>
        <fullName>Ribosomal RNA small subunit methyltransferase G</fullName>
        <ecNumber>2.1.1.-</ecNumber>
    </recommendedName>
    <alternativeName>
        <fullName>16S rRNA 7-methylguanosine methyltransferase</fullName>
        <shortName>16S rRNA m7G methyltransferase</shortName>
    </alternativeName>
</protein>
<gene>
    <name type="primary">rsmG</name>
    <name type="ordered locus">LBL_2985</name>
</gene>
<evidence type="ECO:0000250" key="1"/>
<evidence type="ECO:0000305" key="2"/>
<proteinExistence type="inferred from homology"/>
<feature type="chain" id="PRO_0000342921" description="Ribosomal RNA small subunit methyltransferase G">
    <location>
        <begin position="1"/>
        <end position="254"/>
    </location>
</feature>
<feature type="binding site" evidence="1">
    <location>
        <position position="92"/>
    </location>
    <ligand>
        <name>S-adenosyl-L-methionine</name>
        <dbReference type="ChEBI" id="CHEBI:59789"/>
    </ligand>
</feature>
<feature type="binding site" evidence="1">
    <location>
        <position position="156"/>
    </location>
    <ligand>
        <name>S-adenosyl-L-methionine</name>
        <dbReference type="ChEBI" id="CHEBI:59789"/>
    </ligand>
</feature>
<name>RSMG_LEPBL</name>
<accession>Q04X97</accession>
<comment type="function">
    <text evidence="1">Specifically methylates the N7 position of a guanine in 16S rRNA.</text>
</comment>
<comment type="subcellular location">
    <subcellularLocation>
        <location evidence="2">Cytoplasm</location>
    </subcellularLocation>
</comment>
<comment type="similarity">
    <text evidence="2">Belongs to the methyltransferase superfamily. RNA methyltransferase RsmG family.</text>
</comment>
<organism>
    <name type="scientific">Leptospira borgpetersenii serovar Hardjo-bovis (strain L550)</name>
    <dbReference type="NCBI Taxonomy" id="355276"/>
    <lineage>
        <taxon>Bacteria</taxon>
        <taxon>Pseudomonadati</taxon>
        <taxon>Spirochaetota</taxon>
        <taxon>Spirochaetia</taxon>
        <taxon>Leptospirales</taxon>
        <taxon>Leptospiraceae</taxon>
        <taxon>Leptospira</taxon>
    </lineage>
</organism>
<sequence length="254" mass="29502">MQDPEKFSIESIKERLKERFPKEMDEIIYFFDLELICKFTLFLKEKNEVGGFFSKRDSMEILDRHVLESIYHVYRITKKIGSWKGIQLGDAGTGPGIPGFFFRCLKAYPVVVLIDSQKRKLSHTESFVRSNRITDLKFQFIRTEESKLSLNYVVSRGFIPYPYSVEAVSNLIKIGGTYVPFLGKHDIDVKLEEKVLSYSGFRLESSEDLSSLEFLGMRHIKFLKKISSPRHGYPRTWKDISKESKSGNGKDRID</sequence>
<reference key="1">
    <citation type="journal article" date="2006" name="Proc. Natl. Acad. Sci. U.S.A.">
        <title>Genome reduction in Leptospira borgpetersenii reflects limited transmission potential.</title>
        <authorList>
            <person name="Bulach D.M."/>
            <person name="Zuerner R.L."/>
            <person name="Wilson P."/>
            <person name="Seemann T."/>
            <person name="McGrath A."/>
            <person name="Cullen P.A."/>
            <person name="Davis J."/>
            <person name="Johnson M."/>
            <person name="Kuczek E."/>
            <person name="Alt D.P."/>
            <person name="Peterson-Burch B."/>
            <person name="Coppel R.L."/>
            <person name="Rood J.I."/>
            <person name="Davies J.K."/>
            <person name="Adler B."/>
        </authorList>
    </citation>
    <scope>NUCLEOTIDE SEQUENCE [LARGE SCALE GENOMIC DNA]</scope>
    <source>
        <strain>L550</strain>
    </source>
</reference>